<protein>
    <recommendedName>
        <fullName evidence="1">Bifunctional protein GlmU</fullName>
    </recommendedName>
    <domain>
        <recommendedName>
            <fullName evidence="1">UDP-N-acetylglucosamine pyrophosphorylase</fullName>
            <ecNumber evidence="1">2.7.7.23</ecNumber>
        </recommendedName>
        <alternativeName>
            <fullName evidence="1">N-acetylglucosamine-1-phosphate uridyltransferase</fullName>
        </alternativeName>
    </domain>
    <domain>
        <recommendedName>
            <fullName evidence="1">Glucosamine-1-phosphate N-acetyltransferase</fullName>
            <ecNumber evidence="1">2.3.1.157</ecNumber>
        </recommendedName>
    </domain>
</protein>
<feature type="chain" id="PRO_1000186388" description="Bifunctional protein GlmU">
    <location>
        <begin position="1"/>
        <end position="453"/>
    </location>
</feature>
<feature type="region of interest" description="Pyrophosphorylase" evidence="1">
    <location>
        <begin position="1"/>
        <end position="231"/>
    </location>
</feature>
<feature type="region of interest" description="Linker" evidence="1">
    <location>
        <begin position="232"/>
        <end position="252"/>
    </location>
</feature>
<feature type="region of interest" description="N-acetyltransferase" evidence="1">
    <location>
        <begin position="253"/>
        <end position="453"/>
    </location>
</feature>
<feature type="active site" description="Proton acceptor" evidence="1">
    <location>
        <position position="348"/>
    </location>
</feature>
<feature type="binding site" evidence="1">
    <location>
        <begin position="10"/>
        <end position="13"/>
    </location>
    <ligand>
        <name>UDP-N-acetyl-alpha-D-glucosamine</name>
        <dbReference type="ChEBI" id="CHEBI:57705"/>
    </ligand>
</feature>
<feature type="binding site" evidence="1">
    <location>
        <position position="24"/>
    </location>
    <ligand>
        <name>UDP-N-acetyl-alpha-D-glucosamine</name>
        <dbReference type="ChEBI" id="CHEBI:57705"/>
    </ligand>
</feature>
<feature type="binding site" evidence="1">
    <location>
        <position position="77"/>
    </location>
    <ligand>
        <name>UDP-N-acetyl-alpha-D-glucosamine</name>
        <dbReference type="ChEBI" id="CHEBI:57705"/>
    </ligand>
</feature>
<feature type="binding site" evidence="1">
    <location>
        <begin position="82"/>
        <end position="83"/>
    </location>
    <ligand>
        <name>UDP-N-acetyl-alpha-D-glucosamine</name>
        <dbReference type="ChEBI" id="CHEBI:57705"/>
    </ligand>
</feature>
<feature type="binding site" evidence="1">
    <location>
        <begin position="105"/>
        <end position="107"/>
    </location>
    <ligand>
        <name>UDP-N-acetyl-alpha-D-glucosamine</name>
        <dbReference type="ChEBI" id="CHEBI:57705"/>
    </ligand>
</feature>
<feature type="binding site" evidence="1">
    <location>
        <position position="107"/>
    </location>
    <ligand>
        <name>Mg(2+)</name>
        <dbReference type="ChEBI" id="CHEBI:18420"/>
    </ligand>
</feature>
<feature type="binding site" evidence="1">
    <location>
        <position position="143"/>
    </location>
    <ligand>
        <name>UDP-N-acetyl-alpha-D-glucosamine</name>
        <dbReference type="ChEBI" id="CHEBI:57705"/>
    </ligand>
</feature>
<feature type="binding site" evidence="1">
    <location>
        <position position="157"/>
    </location>
    <ligand>
        <name>UDP-N-acetyl-alpha-D-glucosamine</name>
        <dbReference type="ChEBI" id="CHEBI:57705"/>
    </ligand>
</feature>
<feature type="binding site" evidence="1">
    <location>
        <position position="172"/>
    </location>
    <ligand>
        <name>UDP-N-acetyl-alpha-D-glucosamine</name>
        <dbReference type="ChEBI" id="CHEBI:57705"/>
    </ligand>
</feature>
<feature type="binding site" evidence="1">
    <location>
        <position position="229"/>
    </location>
    <ligand>
        <name>Mg(2+)</name>
        <dbReference type="ChEBI" id="CHEBI:18420"/>
    </ligand>
</feature>
<feature type="binding site" evidence="1">
    <location>
        <position position="229"/>
    </location>
    <ligand>
        <name>UDP-N-acetyl-alpha-D-glucosamine</name>
        <dbReference type="ChEBI" id="CHEBI:57705"/>
    </ligand>
</feature>
<feature type="binding site" evidence="1">
    <location>
        <position position="318"/>
    </location>
    <ligand>
        <name>UDP-N-acetyl-alpha-D-glucosamine</name>
        <dbReference type="ChEBI" id="CHEBI:57705"/>
    </ligand>
</feature>
<feature type="binding site" evidence="1">
    <location>
        <position position="336"/>
    </location>
    <ligand>
        <name>UDP-N-acetyl-alpha-D-glucosamine</name>
        <dbReference type="ChEBI" id="CHEBI:57705"/>
    </ligand>
</feature>
<feature type="binding site" evidence="1">
    <location>
        <position position="351"/>
    </location>
    <ligand>
        <name>UDP-N-acetyl-alpha-D-glucosamine</name>
        <dbReference type="ChEBI" id="CHEBI:57705"/>
    </ligand>
</feature>
<feature type="binding site" evidence="1">
    <location>
        <position position="362"/>
    </location>
    <ligand>
        <name>UDP-N-acetyl-alpha-D-glucosamine</name>
        <dbReference type="ChEBI" id="CHEBI:57705"/>
    </ligand>
</feature>
<feature type="binding site" evidence="1">
    <location>
        <position position="365"/>
    </location>
    <ligand>
        <name>acetyl-CoA</name>
        <dbReference type="ChEBI" id="CHEBI:57288"/>
    </ligand>
</feature>
<feature type="binding site" evidence="1">
    <location>
        <begin position="371"/>
        <end position="372"/>
    </location>
    <ligand>
        <name>acetyl-CoA</name>
        <dbReference type="ChEBI" id="CHEBI:57288"/>
    </ligand>
</feature>
<feature type="binding site" evidence="1">
    <location>
        <position position="390"/>
    </location>
    <ligand>
        <name>acetyl-CoA</name>
        <dbReference type="ChEBI" id="CHEBI:57288"/>
    </ligand>
</feature>
<feature type="binding site" evidence="1">
    <location>
        <position position="408"/>
    </location>
    <ligand>
        <name>acetyl-CoA</name>
        <dbReference type="ChEBI" id="CHEBI:57288"/>
    </ligand>
</feature>
<feature type="binding site" evidence="1">
    <location>
        <position position="425"/>
    </location>
    <ligand>
        <name>acetyl-CoA</name>
        <dbReference type="ChEBI" id="CHEBI:57288"/>
    </ligand>
</feature>
<name>GLMU_RHIR8</name>
<accession>B9JF80</accession>
<proteinExistence type="inferred from homology"/>
<sequence length="453" mass="47753">MERTCLAIILAAGDSTRMKSSISKVLHPIAGRPMIAHVMEAIARTDISAAALVVGRNAEEVAAAADIGGIEVEAYLQKERLGTGHAVLAAREAIARGYDDIIVAYGDVPLLTDVPLRAARKGLADGNDIVVIGFHTENPNAYGRLLVKDGELIAIREAKDATDAELAVTWCNSGLMAINGRKALDLLDRIGNSNAKGEYYLTDLVEIARSLGGRAIAVDAPEVEMTGCNNRAELAFIERLWQERRRHELMLSGVTMIAPETVFLAYDTVIGQDALIEPNVVFGPRVVIDSGAVIHAFSHIEGAHVSGTATVGPFARLRPGADLADGSKVGNFCEVKNGKIGKGAKVNHLSYIGDATIGAGSNIGAGTITCNYDGVNKHETHIGANSFIGSNSSLVAPVRIGDNAYVASGSVITEDVPADALAFGRARQEVKLGRAKVIRERALAIKAAKKGSH</sequence>
<dbReference type="EC" id="2.7.7.23" evidence="1"/>
<dbReference type="EC" id="2.3.1.157" evidence="1"/>
<dbReference type="EMBL" id="CP000628">
    <property type="protein sequence ID" value="ACM26570.1"/>
    <property type="molecule type" value="Genomic_DNA"/>
</dbReference>
<dbReference type="RefSeq" id="WP_012651444.1">
    <property type="nucleotide sequence ID" value="NC_011985.1"/>
</dbReference>
<dbReference type="SMR" id="B9JF80"/>
<dbReference type="STRING" id="311403.Arad_2356"/>
<dbReference type="KEGG" id="ara:Arad_2356"/>
<dbReference type="eggNOG" id="COG1207">
    <property type="taxonomic scope" value="Bacteria"/>
</dbReference>
<dbReference type="HOGENOM" id="CLU_029499_15_2_5"/>
<dbReference type="UniPathway" id="UPA00113">
    <property type="reaction ID" value="UER00532"/>
</dbReference>
<dbReference type="UniPathway" id="UPA00113">
    <property type="reaction ID" value="UER00533"/>
</dbReference>
<dbReference type="UniPathway" id="UPA00973"/>
<dbReference type="Proteomes" id="UP000001600">
    <property type="component" value="Chromosome 1"/>
</dbReference>
<dbReference type="GO" id="GO:0005737">
    <property type="term" value="C:cytoplasm"/>
    <property type="evidence" value="ECO:0007669"/>
    <property type="project" value="UniProtKB-SubCell"/>
</dbReference>
<dbReference type="GO" id="GO:0016020">
    <property type="term" value="C:membrane"/>
    <property type="evidence" value="ECO:0007669"/>
    <property type="project" value="GOC"/>
</dbReference>
<dbReference type="GO" id="GO:0019134">
    <property type="term" value="F:glucosamine-1-phosphate N-acetyltransferase activity"/>
    <property type="evidence" value="ECO:0007669"/>
    <property type="project" value="UniProtKB-UniRule"/>
</dbReference>
<dbReference type="GO" id="GO:0000287">
    <property type="term" value="F:magnesium ion binding"/>
    <property type="evidence" value="ECO:0007669"/>
    <property type="project" value="UniProtKB-UniRule"/>
</dbReference>
<dbReference type="GO" id="GO:0003977">
    <property type="term" value="F:UDP-N-acetylglucosamine diphosphorylase activity"/>
    <property type="evidence" value="ECO:0007669"/>
    <property type="project" value="UniProtKB-UniRule"/>
</dbReference>
<dbReference type="GO" id="GO:0000902">
    <property type="term" value="P:cell morphogenesis"/>
    <property type="evidence" value="ECO:0007669"/>
    <property type="project" value="UniProtKB-UniRule"/>
</dbReference>
<dbReference type="GO" id="GO:0071555">
    <property type="term" value="P:cell wall organization"/>
    <property type="evidence" value="ECO:0007669"/>
    <property type="project" value="UniProtKB-KW"/>
</dbReference>
<dbReference type="GO" id="GO:0009245">
    <property type="term" value="P:lipid A biosynthetic process"/>
    <property type="evidence" value="ECO:0007669"/>
    <property type="project" value="UniProtKB-UniRule"/>
</dbReference>
<dbReference type="GO" id="GO:0009252">
    <property type="term" value="P:peptidoglycan biosynthetic process"/>
    <property type="evidence" value="ECO:0007669"/>
    <property type="project" value="UniProtKB-UniRule"/>
</dbReference>
<dbReference type="GO" id="GO:0008360">
    <property type="term" value="P:regulation of cell shape"/>
    <property type="evidence" value="ECO:0007669"/>
    <property type="project" value="UniProtKB-KW"/>
</dbReference>
<dbReference type="GO" id="GO:0006048">
    <property type="term" value="P:UDP-N-acetylglucosamine biosynthetic process"/>
    <property type="evidence" value="ECO:0007669"/>
    <property type="project" value="UniProtKB-UniPathway"/>
</dbReference>
<dbReference type="CDD" id="cd02540">
    <property type="entry name" value="GT2_GlmU_N_bac"/>
    <property type="match status" value="1"/>
</dbReference>
<dbReference type="CDD" id="cd03353">
    <property type="entry name" value="LbH_GlmU_C"/>
    <property type="match status" value="1"/>
</dbReference>
<dbReference type="Gene3D" id="2.160.10.10">
    <property type="entry name" value="Hexapeptide repeat proteins"/>
    <property type="match status" value="1"/>
</dbReference>
<dbReference type="Gene3D" id="3.90.550.10">
    <property type="entry name" value="Spore Coat Polysaccharide Biosynthesis Protein SpsA, Chain A"/>
    <property type="match status" value="1"/>
</dbReference>
<dbReference type="HAMAP" id="MF_01631">
    <property type="entry name" value="GlmU"/>
    <property type="match status" value="1"/>
</dbReference>
<dbReference type="InterPro" id="IPR005882">
    <property type="entry name" value="Bifunctional_GlmU"/>
</dbReference>
<dbReference type="InterPro" id="IPR050065">
    <property type="entry name" value="GlmU-like"/>
</dbReference>
<dbReference type="InterPro" id="IPR038009">
    <property type="entry name" value="GlmU_C_LbH"/>
</dbReference>
<dbReference type="InterPro" id="IPR001451">
    <property type="entry name" value="Hexapep"/>
</dbReference>
<dbReference type="InterPro" id="IPR018357">
    <property type="entry name" value="Hexapep_transf_CS"/>
</dbReference>
<dbReference type="InterPro" id="IPR025877">
    <property type="entry name" value="MobA-like_NTP_Trfase"/>
</dbReference>
<dbReference type="InterPro" id="IPR029044">
    <property type="entry name" value="Nucleotide-diphossugar_trans"/>
</dbReference>
<dbReference type="InterPro" id="IPR011004">
    <property type="entry name" value="Trimer_LpxA-like_sf"/>
</dbReference>
<dbReference type="NCBIfam" id="TIGR01173">
    <property type="entry name" value="glmU"/>
    <property type="match status" value="1"/>
</dbReference>
<dbReference type="NCBIfam" id="NF010933">
    <property type="entry name" value="PRK14353.1"/>
    <property type="match status" value="1"/>
</dbReference>
<dbReference type="PANTHER" id="PTHR43584:SF3">
    <property type="entry name" value="BIFUNCTIONAL PROTEIN GLMU"/>
    <property type="match status" value="1"/>
</dbReference>
<dbReference type="PANTHER" id="PTHR43584">
    <property type="entry name" value="NUCLEOTIDYL TRANSFERASE"/>
    <property type="match status" value="1"/>
</dbReference>
<dbReference type="Pfam" id="PF00132">
    <property type="entry name" value="Hexapep"/>
    <property type="match status" value="2"/>
</dbReference>
<dbReference type="Pfam" id="PF12804">
    <property type="entry name" value="NTP_transf_3"/>
    <property type="match status" value="1"/>
</dbReference>
<dbReference type="SUPFAM" id="SSF53448">
    <property type="entry name" value="Nucleotide-diphospho-sugar transferases"/>
    <property type="match status" value="1"/>
</dbReference>
<dbReference type="SUPFAM" id="SSF51161">
    <property type="entry name" value="Trimeric LpxA-like enzymes"/>
    <property type="match status" value="1"/>
</dbReference>
<dbReference type="PROSITE" id="PS00101">
    <property type="entry name" value="HEXAPEP_TRANSFERASES"/>
    <property type="match status" value="1"/>
</dbReference>
<evidence type="ECO:0000255" key="1">
    <source>
        <dbReference type="HAMAP-Rule" id="MF_01631"/>
    </source>
</evidence>
<reference key="1">
    <citation type="journal article" date="2009" name="J. Bacteriol.">
        <title>Genome sequences of three Agrobacterium biovars help elucidate the evolution of multichromosome genomes in bacteria.</title>
        <authorList>
            <person name="Slater S.C."/>
            <person name="Goldman B.S."/>
            <person name="Goodner B."/>
            <person name="Setubal J.C."/>
            <person name="Farrand S.K."/>
            <person name="Nester E.W."/>
            <person name="Burr T.J."/>
            <person name="Banta L."/>
            <person name="Dickerman A.W."/>
            <person name="Paulsen I."/>
            <person name="Otten L."/>
            <person name="Suen G."/>
            <person name="Welch R."/>
            <person name="Almeida N.F."/>
            <person name="Arnold F."/>
            <person name="Burton O.T."/>
            <person name="Du Z."/>
            <person name="Ewing A."/>
            <person name="Godsy E."/>
            <person name="Heisel S."/>
            <person name="Houmiel K.L."/>
            <person name="Jhaveri J."/>
            <person name="Lu J."/>
            <person name="Miller N.M."/>
            <person name="Norton S."/>
            <person name="Chen Q."/>
            <person name="Phoolcharoen W."/>
            <person name="Ohlin V."/>
            <person name="Ondrusek D."/>
            <person name="Pride N."/>
            <person name="Stricklin S.L."/>
            <person name="Sun J."/>
            <person name="Wheeler C."/>
            <person name="Wilson L."/>
            <person name="Zhu H."/>
            <person name="Wood D.W."/>
        </authorList>
    </citation>
    <scope>NUCLEOTIDE SEQUENCE [LARGE SCALE GENOMIC DNA]</scope>
    <source>
        <strain>K84 / ATCC BAA-868</strain>
    </source>
</reference>
<organism>
    <name type="scientific">Rhizobium rhizogenes (strain K84 / ATCC BAA-868)</name>
    <name type="common">Agrobacterium radiobacter</name>
    <dbReference type="NCBI Taxonomy" id="311403"/>
    <lineage>
        <taxon>Bacteria</taxon>
        <taxon>Pseudomonadati</taxon>
        <taxon>Pseudomonadota</taxon>
        <taxon>Alphaproteobacteria</taxon>
        <taxon>Hyphomicrobiales</taxon>
        <taxon>Rhizobiaceae</taxon>
        <taxon>Rhizobium/Agrobacterium group</taxon>
        <taxon>Rhizobium</taxon>
    </lineage>
</organism>
<keyword id="KW-0012">Acyltransferase</keyword>
<keyword id="KW-0133">Cell shape</keyword>
<keyword id="KW-0961">Cell wall biogenesis/degradation</keyword>
<keyword id="KW-0963">Cytoplasm</keyword>
<keyword id="KW-0460">Magnesium</keyword>
<keyword id="KW-0479">Metal-binding</keyword>
<keyword id="KW-0511">Multifunctional enzyme</keyword>
<keyword id="KW-0548">Nucleotidyltransferase</keyword>
<keyword id="KW-0573">Peptidoglycan synthesis</keyword>
<keyword id="KW-0677">Repeat</keyword>
<keyword id="KW-0808">Transferase</keyword>
<comment type="function">
    <text evidence="1">Catalyzes the last two sequential reactions in the de novo biosynthetic pathway for UDP-N-acetylglucosamine (UDP-GlcNAc). The C-terminal domain catalyzes the transfer of acetyl group from acetyl coenzyme A to glucosamine-1-phosphate (GlcN-1-P) to produce N-acetylglucosamine-1-phosphate (GlcNAc-1-P), which is converted into UDP-GlcNAc by the transfer of uridine 5-monophosphate (from uridine 5-triphosphate), a reaction catalyzed by the N-terminal domain.</text>
</comment>
<comment type="catalytic activity">
    <reaction evidence="1">
        <text>alpha-D-glucosamine 1-phosphate + acetyl-CoA = N-acetyl-alpha-D-glucosamine 1-phosphate + CoA + H(+)</text>
        <dbReference type="Rhea" id="RHEA:13725"/>
        <dbReference type="ChEBI" id="CHEBI:15378"/>
        <dbReference type="ChEBI" id="CHEBI:57287"/>
        <dbReference type="ChEBI" id="CHEBI:57288"/>
        <dbReference type="ChEBI" id="CHEBI:57776"/>
        <dbReference type="ChEBI" id="CHEBI:58516"/>
        <dbReference type="EC" id="2.3.1.157"/>
    </reaction>
</comment>
<comment type="catalytic activity">
    <reaction evidence="1">
        <text>N-acetyl-alpha-D-glucosamine 1-phosphate + UTP + H(+) = UDP-N-acetyl-alpha-D-glucosamine + diphosphate</text>
        <dbReference type="Rhea" id="RHEA:13509"/>
        <dbReference type="ChEBI" id="CHEBI:15378"/>
        <dbReference type="ChEBI" id="CHEBI:33019"/>
        <dbReference type="ChEBI" id="CHEBI:46398"/>
        <dbReference type="ChEBI" id="CHEBI:57705"/>
        <dbReference type="ChEBI" id="CHEBI:57776"/>
        <dbReference type="EC" id="2.7.7.23"/>
    </reaction>
</comment>
<comment type="cofactor">
    <cofactor evidence="1">
        <name>Mg(2+)</name>
        <dbReference type="ChEBI" id="CHEBI:18420"/>
    </cofactor>
    <text evidence="1">Binds 1 Mg(2+) ion per subunit.</text>
</comment>
<comment type="pathway">
    <text evidence="1">Nucleotide-sugar biosynthesis; UDP-N-acetyl-alpha-D-glucosamine biosynthesis; N-acetyl-alpha-D-glucosamine 1-phosphate from alpha-D-glucosamine 6-phosphate (route II): step 2/2.</text>
</comment>
<comment type="pathway">
    <text evidence="1">Nucleotide-sugar biosynthesis; UDP-N-acetyl-alpha-D-glucosamine biosynthesis; UDP-N-acetyl-alpha-D-glucosamine from N-acetyl-alpha-D-glucosamine 1-phosphate: step 1/1.</text>
</comment>
<comment type="pathway">
    <text evidence="1">Bacterial outer membrane biogenesis; LPS lipid A biosynthesis.</text>
</comment>
<comment type="subunit">
    <text evidence="1">Homotrimer.</text>
</comment>
<comment type="subcellular location">
    <subcellularLocation>
        <location evidence="1">Cytoplasm</location>
    </subcellularLocation>
</comment>
<comment type="similarity">
    <text evidence="1">In the N-terminal section; belongs to the N-acetylglucosamine-1-phosphate uridyltransferase family.</text>
</comment>
<comment type="similarity">
    <text evidence="1">In the C-terminal section; belongs to the transferase hexapeptide repeat family.</text>
</comment>
<gene>
    <name evidence="1" type="primary">glmU</name>
    <name type="ordered locus">Arad_2356</name>
</gene>